<organism>
    <name type="scientific">Serratia proteamaculans (strain 568)</name>
    <dbReference type="NCBI Taxonomy" id="399741"/>
    <lineage>
        <taxon>Bacteria</taxon>
        <taxon>Pseudomonadati</taxon>
        <taxon>Pseudomonadota</taxon>
        <taxon>Gammaproteobacteria</taxon>
        <taxon>Enterobacterales</taxon>
        <taxon>Yersiniaceae</taxon>
        <taxon>Serratia</taxon>
    </lineage>
</organism>
<feature type="chain" id="PRO_1000069701" description="Pyridoxine/pyridoxamine 5'-phosphate oxidase">
    <location>
        <begin position="1"/>
        <end position="217"/>
    </location>
</feature>
<feature type="binding site" evidence="1">
    <location>
        <begin position="13"/>
        <end position="16"/>
    </location>
    <ligand>
        <name>substrate</name>
    </ligand>
</feature>
<feature type="binding site" evidence="1">
    <location>
        <begin position="66"/>
        <end position="71"/>
    </location>
    <ligand>
        <name>FMN</name>
        <dbReference type="ChEBI" id="CHEBI:58210"/>
    </ligand>
</feature>
<feature type="binding site" evidence="1">
    <location>
        <position position="71"/>
    </location>
    <ligand>
        <name>substrate</name>
    </ligand>
</feature>
<feature type="binding site" evidence="1">
    <location>
        <begin position="81"/>
        <end position="82"/>
    </location>
    <ligand>
        <name>FMN</name>
        <dbReference type="ChEBI" id="CHEBI:58210"/>
    </ligand>
</feature>
<feature type="binding site" evidence="1">
    <location>
        <position position="87"/>
    </location>
    <ligand>
        <name>FMN</name>
        <dbReference type="ChEBI" id="CHEBI:58210"/>
    </ligand>
</feature>
<feature type="binding site" evidence="1">
    <location>
        <position position="88"/>
    </location>
    <ligand>
        <name>FMN</name>
        <dbReference type="ChEBI" id="CHEBI:58210"/>
    </ligand>
</feature>
<feature type="binding site" evidence="1">
    <location>
        <position position="110"/>
    </location>
    <ligand>
        <name>FMN</name>
        <dbReference type="ChEBI" id="CHEBI:58210"/>
    </ligand>
</feature>
<feature type="binding site" evidence="1">
    <location>
        <position position="128"/>
    </location>
    <ligand>
        <name>substrate</name>
    </ligand>
</feature>
<feature type="binding site" evidence="1">
    <location>
        <position position="132"/>
    </location>
    <ligand>
        <name>substrate</name>
    </ligand>
</feature>
<feature type="binding site" evidence="1">
    <location>
        <position position="136"/>
    </location>
    <ligand>
        <name>substrate</name>
    </ligand>
</feature>
<feature type="binding site" evidence="1">
    <location>
        <begin position="145"/>
        <end position="146"/>
    </location>
    <ligand>
        <name>FMN</name>
        <dbReference type="ChEBI" id="CHEBI:58210"/>
    </ligand>
</feature>
<feature type="binding site" evidence="1">
    <location>
        <position position="190"/>
    </location>
    <ligand>
        <name>FMN</name>
        <dbReference type="ChEBI" id="CHEBI:58210"/>
    </ligand>
</feature>
<feature type="binding site" evidence="1">
    <location>
        <begin position="196"/>
        <end position="198"/>
    </location>
    <ligand>
        <name>substrate</name>
    </ligand>
</feature>
<feature type="binding site" evidence="1">
    <location>
        <position position="200"/>
    </location>
    <ligand>
        <name>FMN</name>
        <dbReference type="ChEBI" id="CHEBI:58210"/>
    </ligand>
</feature>
<sequence length="217" mass="25240">MIENNEFDVADLRREYTRGGLRRNDLTTNPLELFEHWLKQACDARLADPTAMCVATVDENGQPYQRIVLLKHFDDKGLVFYTNLGSRKAQQLANNPHISLLFPWHMLDRQVIFLGKAERLSTFEVMKYFASRPKDSQIGAWVSQQSSRISARGVLESKFLELKQKFQQGEVPLPSFWGGFRVNFDSVEFWQGGANRLHDRFLYQRDGNDWKIDRLAP</sequence>
<protein>
    <recommendedName>
        <fullName evidence="1">Pyridoxine/pyridoxamine 5'-phosphate oxidase</fullName>
        <ecNumber evidence="1">1.4.3.5</ecNumber>
    </recommendedName>
    <alternativeName>
        <fullName evidence="1">PNP/PMP oxidase</fullName>
        <shortName evidence="1">PNPOx</shortName>
    </alternativeName>
    <alternativeName>
        <fullName evidence="1">Pyridoxal 5'-phosphate synthase</fullName>
    </alternativeName>
</protein>
<evidence type="ECO:0000255" key="1">
    <source>
        <dbReference type="HAMAP-Rule" id="MF_01629"/>
    </source>
</evidence>
<accession>A8GDX9</accession>
<comment type="function">
    <text evidence="1">Catalyzes the oxidation of either pyridoxine 5'-phosphate (PNP) or pyridoxamine 5'-phosphate (PMP) into pyridoxal 5'-phosphate (PLP).</text>
</comment>
<comment type="catalytic activity">
    <reaction evidence="1">
        <text>pyridoxamine 5'-phosphate + O2 + H2O = pyridoxal 5'-phosphate + H2O2 + NH4(+)</text>
        <dbReference type="Rhea" id="RHEA:15817"/>
        <dbReference type="ChEBI" id="CHEBI:15377"/>
        <dbReference type="ChEBI" id="CHEBI:15379"/>
        <dbReference type="ChEBI" id="CHEBI:16240"/>
        <dbReference type="ChEBI" id="CHEBI:28938"/>
        <dbReference type="ChEBI" id="CHEBI:58451"/>
        <dbReference type="ChEBI" id="CHEBI:597326"/>
        <dbReference type="EC" id="1.4.3.5"/>
    </reaction>
</comment>
<comment type="catalytic activity">
    <reaction evidence="1">
        <text>pyridoxine 5'-phosphate + O2 = pyridoxal 5'-phosphate + H2O2</text>
        <dbReference type="Rhea" id="RHEA:15149"/>
        <dbReference type="ChEBI" id="CHEBI:15379"/>
        <dbReference type="ChEBI" id="CHEBI:16240"/>
        <dbReference type="ChEBI" id="CHEBI:58589"/>
        <dbReference type="ChEBI" id="CHEBI:597326"/>
        <dbReference type="EC" id="1.4.3.5"/>
    </reaction>
</comment>
<comment type="cofactor">
    <cofactor evidence="1">
        <name>FMN</name>
        <dbReference type="ChEBI" id="CHEBI:58210"/>
    </cofactor>
    <text evidence="1">Binds 1 FMN per subunit.</text>
</comment>
<comment type="pathway">
    <text evidence="1">Cofactor metabolism; pyridoxal 5'-phosphate salvage; pyridoxal 5'-phosphate from pyridoxamine 5'-phosphate: step 1/1.</text>
</comment>
<comment type="pathway">
    <text evidence="1">Cofactor metabolism; pyridoxal 5'-phosphate salvage; pyridoxal 5'-phosphate from pyridoxine 5'-phosphate: step 1/1.</text>
</comment>
<comment type="subunit">
    <text evidence="1">Homodimer.</text>
</comment>
<comment type="similarity">
    <text evidence="1">Belongs to the pyridoxamine 5'-phosphate oxidase family.</text>
</comment>
<proteinExistence type="inferred from homology"/>
<name>PDXH_SERP5</name>
<dbReference type="EC" id="1.4.3.5" evidence="1"/>
<dbReference type="EMBL" id="CP000826">
    <property type="protein sequence ID" value="ABV41319.1"/>
    <property type="molecule type" value="Genomic_DNA"/>
</dbReference>
<dbReference type="SMR" id="A8GDX9"/>
<dbReference type="STRING" id="399741.Spro_2218"/>
<dbReference type="KEGG" id="spe:Spro_2218"/>
<dbReference type="eggNOG" id="COG0259">
    <property type="taxonomic scope" value="Bacteria"/>
</dbReference>
<dbReference type="HOGENOM" id="CLU_032263_2_2_6"/>
<dbReference type="OrthoDB" id="9780392at2"/>
<dbReference type="UniPathway" id="UPA01068">
    <property type="reaction ID" value="UER00304"/>
</dbReference>
<dbReference type="UniPathway" id="UPA01068">
    <property type="reaction ID" value="UER00305"/>
</dbReference>
<dbReference type="GO" id="GO:0010181">
    <property type="term" value="F:FMN binding"/>
    <property type="evidence" value="ECO:0007669"/>
    <property type="project" value="UniProtKB-UniRule"/>
</dbReference>
<dbReference type="GO" id="GO:0004733">
    <property type="term" value="F:pyridoxamine phosphate oxidase activity"/>
    <property type="evidence" value="ECO:0007669"/>
    <property type="project" value="UniProtKB-UniRule"/>
</dbReference>
<dbReference type="GO" id="GO:0008615">
    <property type="term" value="P:pyridoxine biosynthetic process"/>
    <property type="evidence" value="ECO:0007669"/>
    <property type="project" value="UniProtKB-KW"/>
</dbReference>
<dbReference type="FunFam" id="2.30.110.10:FF:000001">
    <property type="entry name" value="Pyridoxine/pyridoxamine 5'-phosphate oxidase"/>
    <property type="match status" value="1"/>
</dbReference>
<dbReference type="Gene3D" id="2.30.110.10">
    <property type="entry name" value="Electron Transport, Fmn-binding Protein, Chain A"/>
    <property type="match status" value="1"/>
</dbReference>
<dbReference type="HAMAP" id="MF_01629">
    <property type="entry name" value="PdxH"/>
    <property type="match status" value="1"/>
</dbReference>
<dbReference type="InterPro" id="IPR000659">
    <property type="entry name" value="Pyridox_Oxase"/>
</dbReference>
<dbReference type="InterPro" id="IPR019740">
    <property type="entry name" value="Pyridox_Oxase_CS"/>
</dbReference>
<dbReference type="InterPro" id="IPR011576">
    <property type="entry name" value="Pyridox_Oxase_N"/>
</dbReference>
<dbReference type="InterPro" id="IPR019576">
    <property type="entry name" value="Pyridoxamine_oxidase_dimer_C"/>
</dbReference>
<dbReference type="InterPro" id="IPR012349">
    <property type="entry name" value="Split_barrel_FMN-bd"/>
</dbReference>
<dbReference type="NCBIfam" id="TIGR00558">
    <property type="entry name" value="pdxH"/>
    <property type="match status" value="1"/>
</dbReference>
<dbReference type="NCBIfam" id="NF004231">
    <property type="entry name" value="PRK05679.1"/>
    <property type="match status" value="1"/>
</dbReference>
<dbReference type="PANTHER" id="PTHR10851:SF0">
    <property type="entry name" value="PYRIDOXINE-5'-PHOSPHATE OXIDASE"/>
    <property type="match status" value="1"/>
</dbReference>
<dbReference type="PANTHER" id="PTHR10851">
    <property type="entry name" value="PYRIDOXINE-5-PHOSPHATE OXIDASE"/>
    <property type="match status" value="1"/>
</dbReference>
<dbReference type="Pfam" id="PF10590">
    <property type="entry name" value="PNP_phzG_C"/>
    <property type="match status" value="1"/>
</dbReference>
<dbReference type="Pfam" id="PF01243">
    <property type="entry name" value="PNPOx_N"/>
    <property type="match status" value="1"/>
</dbReference>
<dbReference type="PIRSF" id="PIRSF000190">
    <property type="entry name" value="Pyd_amn-ph_oxd"/>
    <property type="match status" value="1"/>
</dbReference>
<dbReference type="SUPFAM" id="SSF50475">
    <property type="entry name" value="FMN-binding split barrel"/>
    <property type="match status" value="1"/>
</dbReference>
<dbReference type="PROSITE" id="PS01064">
    <property type="entry name" value="PYRIDOX_OXIDASE"/>
    <property type="match status" value="1"/>
</dbReference>
<reference key="1">
    <citation type="submission" date="2007-09" db="EMBL/GenBank/DDBJ databases">
        <title>Complete sequence of chromosome of Serratia proteamaculans 568.</title>
        <authorList>
            <consortium name="US DOE Joint Genome Institute"/>
            <person name="Copeland A."/>
            <person name="Lucas S."/>
            <person name="Lapidus A."/>
            <person name="Barry K."/>
            <person name="Glavina del Rio T."/>
            <person name="Dalin E."/>
            <person name="Tice H."/>
            <person name="Pitluck S."/>
            <person name="Chain P."/>
            <person name="Malfatti S."/>
            <person name="Shin M."/>
            <person name="Vergez L."/>
            <person name="Schmutz J."/>
            <person name="Larimer F."/>
            <person name="Land M."/>
            <person name="Hauser L."/>
            <person name="Kyrpides N."/>
            <person name="Kim E."/>
            <person name="Taghavi S."/>
            <person name="Newman L."/>
            <person name="Vangronsveld J."/>
            <person name="van der Lelie D."/>
            <person name="Richardson P."/>
        </authorList>
    </citation>
    <scope>NUCLEOTIDE SEQUENCE [LARGE SCALE GENOMIC DNA]</scope>
    <source>
        <strain>568</strain>
    </source>
</reference>
<gene>
    <name evidence="1" type="primary">pdxH</name>
    <name type="ordered locus">Spro_2218</name>
</gene>
<keyword id="KW-0285">Flavoprotein</keyword>
<keyword id="KW-0288">FMN</keyword>
<keyword id="KW-0560">Oxidoreductase</keyword>
<keyword id="KW-0664">Pyridoxine biosynthesis</keyword>